<feature type="chain" id="PRO_0000173447" description="Uncharacterized transporter mfc1">
    <location>
        <begin position="1"/>
        <end position="495"/>
    </location>
</feature>
<feature type="transmembrane region" description="Helical" evidence="1">
    <location>
        <begin position="43"/>
        <end position="63"/>
    </location>
</feature>
<feature type="transmembrane region" description="Helical" evidence="1">
    <location>
        <begin position="75"/>
        <end position="95"/>
    </location>
</feature>
<feature type="transmembrane region" description="Helical" evidence="1">
    <location>
        <begin position="106"/>
        <end position="126"/>
    </location>
</feature>
<feature type="transmembrane region" description="Helical" evidence="1">
    <location>
        <begin position="128"/>
        <end position="148"/>
    </location>
</feature>
<feature type="transmembrane region" description="Helical" evidence="1">
    <location>
        <begin position="168"/>
        <end position="188"/>
    </location>
</feature>
<feature type="transmembrane region" description="Helical" evidence="1">
    <location>
        <begin position="196"/>
        <end position="216"/>
    </location>
</feature>
<feature type="transmembrane region" description="Helical" evidence="1">
    <location>
        <begin position="284"/>
        <end position="304"/>
    </location>
</feature>
<feature type="transmembrane region" description="Helical" evidence="1">
    <location>
        <begin position="323"/>
        <end position="343"/>
    </location>
</feature>
<feature type="transmembrane region" description="Helical" evidence="1">
    <location>
        <begin position="366"/>
        <end position="386"/>
    </location>
</feature>
<feature type="transmembrane region" description="Helical" evidence="1">
    <location>
        <begin position="390"/>
        <end position="410"/>
    </location>
</feature>
<feature type="transmembrane region" description="Helical" evidence="1">
    <location>
        <begin position="426"/>
        <end position="446"/>
    </location>
</feature>
<feature type="transmembrane region" description="Helical" evidence="1">
    <location>
        <begin position="461"/>
        <end position="481"/>
    </location>
</feature>
<evidence type="ECO:0000255" key="1"/>
<evidence type="ECO:0000269" key="2">
    <source>
    </source>
</evidence>
<evidence type="ECO:0000305" key="3"/>
<reference key="1">
    <citation type="journal article" date="2002" name="Nature">
        <title>The genome sequence of Schizosaccharomyces pombe.</title>
        <authorList>
            <person name="Wood V."/>
            <person name="Gwilliam R."/>
            <person name="Rajandream M.A."/>
            <person name="Lyne M.H."/>
            <person name="Lyne R."/>
            <person name="Stewart A."/>
            <person name="Sgouros J.G."/>
            <person name="Peat N."/>
            <person name="Hayles J."/>
            <person name="Baker S.G."/>
            <person name="Basham D."/>
            <person name="Bowman S."/>
            <person name="Brooks K."/>
            <person name="Brown D."/>
            <person name="Brown S."/>
            <person name="Chillingworth T."/>
            <person name="Churcher C.M."/>
            <person name="Collins M."/>
            <person name="Connor R."/>
            <person name="Cronin A."/>
            <person name="Davis P."/>
            <person name="Feltwell T."/>
            <person name="Fraser A."/>
            <person name="Gentles S."/>
            <person name="Goble A."/>
            <person name="Hamlin N."/>
            <person name="Harris D.E."/>
            <person name="Hidalgo J."/>
            <person name="Hodgson G."/>
            <person name="Holroyd S."/>
            <person name="Hornsby T."/>
            <person name="Howarth S."/>
            <person name="Huckle E.J."/>
            <person name="Hunt S."/>
            <person name="Jagels K."/>
            <person name="James K.D."/>
            <person name="Jones L."/>
            <person name="Jones M."/>
            <person name="Leather S."/>
            <person name="McDonald S."/>
            <person name="McLean J."/>
            <person name="Mooney P."/>
            <person name="Moule S."/>
            <person name="Mungall K.L."/>
            <person name="Murphy L.D."/>
            <person name="Niblett D."/>
            <person name="Odell C."/>
            <person name="Oliver K."/>
            <person name="O'Neil S."/>
            <person name="Pearson D."/>
            <person name="Quail M.A."/>
            <person name="Rabbinowitsch E."/>
            <person name="Rutherford K.M."/>
            <person name="Rutter S."/>
            <person name="Saunders D."/>
            <person name="Seeger K."/>
            <person name="Sharp S."/>
            <person name="Skelton J."/>
            <person name="Simmonds M.N."/>
            <person name="Squares R."/>
            <person name="Squares S."/>
            <person name="Stevens K."/>
            <person name="Taylor K."/>
            <person name="Taylor R.G."/>
            <person name="Tivey A."/>
            <person name="Walsh S.V."/>
            <person name="Warren T."/>
            <person name="Whitehead S."/>
            <person name="Woodward J.R."/>
            <person name="Volckaert G."/>
            <person name="Aert R."/>
            <person name="Robben J."/>
            <person name="Grymonprez B."/>
            <person name="Weltjens I."/>
            <person name="Vanstreels E."/>
            <person name="Rieger M."/>
            <person name="Schaefer M."/>
            <person name="Mueller-Auer S."/>
            <person name="Gabel C."/>
            <person name="Fuchs M."/>
            <person name="Duesterhoeft A."/>
            <person name="Fritzc C."/>
            <person name="Holzer E."/>
            <person name="Moestl D."/>
            <person name="Hilbert H."/>
            <person name="Borzym K."/>
            <person name="Langer I."/>
            <person name="Beck A."/>
            <person name="Lehrach H."/>
            <person name="Reinhardt R."/>
            <person name="Pohl T.M."/>
            <person name="Eger P."/>
            <person name="Zimmermann W."/>
            <person name="Wedler H."/>
            <person name="Wambutt R."/>
            <person name="Purnelle B."/>
            <person name="Goffeau A."/>
            <person name="Cadieu E."/>
            <person name="Dreano S."/>
            <person name="Gloux S."/>
            <person name="Lelaure V."/>
            <person name="Mottier S."/>
            <person name="Galibert F."/>
            <person name="Aves S.J."/>
            <person name="Xiang Z."/>
            <person name="Hunt C."/>
            <person name="Moore K."/>
            <person name="Hurst S.M."/>
            <person name="Lucas M."/>
            <person name="Rochet M."/>
            <person name="Gaillardin C."/>
            <person name="Tallada V.A."/>
            <person name="Garzon A."/>
            <person name="Thode G."/>
            <person name="Daga R.R."/>
            <person name="Cruzado L."/>
            <person name="Jimenez J."/>
            <person name="Sanchez M."/>
            <person name="del Rey F."/>
            <person name="Benito J."/>
            <person name="Dominguez A."/>
            <person name="Revuelta J.L."/>
            <person name="Moreno S."/>
            <person name="Armstrong J."/>
            <person name="Forsburg S.L."/>
            <person name="Cerutti L."/>
            <person name="Lowe T."/>
            <person name="McCombie W.R."/>
            <person name="Paulsen I."/>
            <person name="Potashkin J."/>
            <person name="Shpakovski G.V."/>
            <person name="Ussery D."/>
            <person name="Barrell B.G."/>
            <person name="Nurse P."/>
        </authorList>
    </citation>
    <scope>NUCLEOTIDE SEQUENCE [LARGE SCALE GENOMIC DNA]</scope>
    <source>
        <strain>972 / ATCC 24843</strain>
    </source>
</reference>
<reference key="2">
    <citation type="journal article" date="2010" name="Genome Biol.">
        <title>Global fitness profiling of fission yeast deletion strains by barcode sequencing.</title>
        <authorList>
            <person name="Han T.X."/>
            <person name="Xu X.Y."/>
            <person name="Zhang M.J."/>
            <person name="Peng X."/>
            <person name="Du L.L."/>
        </authorList>
    </citation>
    <scope>DISRUPTION PHENOTYPE</scope>
</reference>
<comment type="subcellular location">
    <subcellularLocation>
        <location evidence="3">Membrane</location>
        <topology evidence="3">Multi-pass membrane protein</topology>
    </subcellularLocation>
</comment>
<comment type="disruption phenotype">
    <text evidence="2">Lead to sensitivity to camptothecin and DNA damaging agents.</text>
</comment>
<comment type="similarity">
    <text evidence="3">Belongs to the major facilitator superfamily. CAR1 family.</text>
</comment>
<proteinExistence type="inferred from homology"/>
<protein>
    <recommendedName>
        <fullName>Uncharacterized transporter mfc1</fullName>
    </recommendedName>
</protein>
<gene>
    <name type="primary">mfc1</name>
    <name type="ORF">SPAPB1A11.01</name>
    <name type="ORF">SPAPB24D3.11</name>
</gene>
<organism>
    <name type="scientific">Schizosaccharomyces pombe (strain 972 / ATCC 24843)</name>
    <name type="common">Fission yeast</name>
    <dbReference type="NCBI Taxonomy" id="284812"/>
    <lineage>
        <taxon>Eukaryota</taxon>
        <taxon>Fungi</taxon>
        <taxon>Dikarya</taxon>
        <taxon>Ascomycota</taxon>
        <taxon>Taphrinomycotina</taxon>
        <taxon>Schizosaccharomycetes</taxon>
        <taxon>Schizosaccharomycetales</taxon>
        <taxon>Schizosaccharomycetaceae</taxon>
        <taxon>Schizosaccharomyces</taxon>
    </lineage>
</organism>
<dbReference type="EMBL" id="CU329670">
    <property type="protein sequence ID" value="CAC36907.2"/>
    <property type="molecule type" value="Genomic_DNA"/>
</dbReference>
<dbReference type="RefSeq" id="XP_001713075.1">
    <property type="nucleotide sequence ID" value="XM_001713023.2"/>
</dbReference>
<dbReference type="SMR" id="Q9HDX4"/>
<dbReference type="BioGRID" id="280556">
    <property type="interactions" value="1"/>
</dbReference>
<dbReference type="FunCoup" id="Q9HDX4">
    <property type="interactions" value="7"/>
</dbReference>
<dbReference type="STRING" id="284812.Q9HDX4"/>
<dbReference type="TCDB" id="2.A.1.2.76">
    <property type="family name" value="the major facilitator superfamily (mfs)"/>
</dbReference>
<dbReference type="PaxDb" id="4896-SPAPB1A11.01.1"/>
<dbReference type="EnsemblFungi" id="SPAPB1A11.01.1">
    <property type="protein sequence ID" value="SPAPB1A11.01.1:pep"/>
    <property type="gene ID" value="SPAPB1A11.01"/>
</dbReference>
<dbReference type="PomBase" id="SPAPB1A11.01">
    <property type="gene designation" value="mfc1"/>
</dbReference>
<dbReference type="VEuPathDB" id="FungiDB:SPAPB1A11.01"/>
<dbReference type="eggNOG" id="KOG0255">
    <property type="taxonomic scope" value="Eukaryota"/>
</dbReference>
<dbReference type="HOGENOM" id="CLU_008455_1_1_1"/>
<dbReference type="InParanoid" id="Q9HDX4"/>
<dbReference type="OMA" id="SMYSLYA"/>
<dbReference type="PhylomeDB" id="Q9HDX4"/>
<dbReference type="PRO" id="PR:Q9HDX4"/>
<dbReference type="Proteomes" id="UP000002485">
    <property type="component" value="Chromosome I"/>
</dbReference>
<dbReference type="GO" id="GO:0005737">
    <property type="term" value="C:cytoplasm"/>
    <property type="evidence" value="ECO:0007005"/>
    <property type="project" value="PomBase"/>
</dbReference>
<dbReference type="GO" id="GO:0005628">
    <property type="term" value="C:prospore membrane"/>
    <property type="evidence" value="ECO:0000314"/>
    <property type="project" value="PomBase"/>
</dbReference>
<dbReference type="GO" id="GO:0005375">
    <property type="term" value="F:copper ion transmembrane transporter activity"/>
    <property type="evidence" value="ECO:0000315"/>
    <property type="project" value="PomBase"/>
</dbReference>
<dbReference type="GO" id="GO:0022857">
    <property type="term" value="F:transmembrane transporter activity"/>
    <property type="evidence" value="ECO:0000318"/>
    <property type="project" value="GO_Central"/>
</dbReference>
<dbReference type="GO" id="GO:0097430">
    <property type="term" value="P:copper ion import across prospore membrane"/>
    <property type="evidence" value="ECO:0000315"/>
    <property type="project" value="PomBase"/>
</dbReference>
<dbReference type="GO" id="GO:0055085">
    <property type="term" value="P:transmembrane transport"/>
    <property type="evidence" value="ECO:0000318"/>
    <property type="project" value="GO_Central"/>
</dbReference>
<dbReference type="CDD" id="cd17323">
    <property type="entry name" value="MFS_Tpo1_MDR_like"/>
    <property type="match status" value="1"/>
</dbReference>
<dbReference type="FunFam" id="1.20.1250.20:FF:000509">
    <property type="entry name" value="MFS general substrate transporter"/>
    <property type="match status" value="1"/>
</dbReference>
<dbReference type="Gene3D" id="1.20.1250.20">
    <property type="entry name" value="MFS general substrate transporter like domains"/>
    <property type="match status" value="1"/>
</dbReference>
<dbReference type="InterPro" id="IPR011701">
    <property type="entry name" value="MFS"/>
</dbReference>
<dbReference type="InterPro" id="IPR020846">
    <property type="entry name" value="MFS_dom"/>
</dbReference>
<dbReference type="InterPro" id="IPR036259">
    <property type="entry name" value="MFS_trans_sf"/>
</dbReference>
<dbReference type="PANTHER" id="PTHR23502">
    <property type="entry name" value="MAJOR FACILITATOR SUPERFAMILY"/>
    <property type="match status" value="1"/>
</dbReference>
<dbReference type="PANTHER" id="PTHR23502:SF189">
    <property type="entry name" value="MEMBRANE TRANSPORTER"/>
    <property type="match status" value="1"/>
</dbReference>
<dbReference type="Pfam" id="PF07690">
    <property type="entry name" value="MFS_1"/>
    <property type="match status" value="1"/>
</dbReference>
<dbReference type="SUPFAM" id="SSF103473">
    <property type="entry name" value="MFS general substrate transporter"/>
    <property type="match status" value="1"/>
</dbReference>
<dbReference type="PROSITE" id="PS50850">
    <property type="entry name" value="MFS"/>
    <property type="match status" value="1"/>
</dbReference>
<accession>Q9HDX4</accession>
<accession>Q9C0Y3</accession>
<keyword id="KW-0472">Membrane</keyword>
<keyword id="KW-1185">Reference proteome</keyword>
<keyword id="KW-0812">Transmembrane</keyword>
<keyword id="KW-1133">Transmembrane helix</keyword>
<keyword id="KW-0813">Transport</keyword>
<sequence length="495" mass="55307">MSVSDKDFKDIELLPVKSIESKDSIDQCDPLTWPIRIRIINTIIISFMTMLCMYGSSVFMPSIPELCEKFGEPETLVVLGATLYVIGVMLGPLIFSPLSELYGRRPLNIFGYTLFALMQIPTALSVNLAMFVVFRFFSGFFGSVGLGIGAGSLSDMFSKRDRGKYIGIYFLGICLGPAIAPIASGFIAGSSISWRWEFWILLMLSGVSLLAGVVFLKETYAPVLKRKQAKKLLEKQENQKSVEVKISEITESSQQIDPDKSFAEVVHILVTTIRRPLHLLCTQPIMILISLIVGTVYGILYLLFTAFAEVWISQYHFTSGLSGLTYISLSIGQVFAVFVLLPLNQKYWLSAVQKNNGVPEPEFRLPMAFLGCFAIMTGMFIFGWTVQYKVFWFVPLIGTTLVGAGFVMTFNPMNMFIVDNYGRYAASAMAAIAIPRNIFGACFPLFAEKLFERLGYGWGSSLLAFLLVAINFSIAALYMFGKTIREKRPFDHTKY</sequence>
<name>MFC1_SCHPO</name>